<sequence>MKPMKTSWADEVEADYVDGLPPTKEYTQGNLKFVAEYKYNEDGKKVKVVRTYKIQKQTVPKVVARRRNWSKFGDSRLDKPGPCSQTTMVAEEVHMVFISSKELEQAQAQEPQMEPGKNIARCRICNGEHWSVNCPYKGTSMDSKTLMESKATAAAAAAVSDASKTGKYVSPFLKEGGCAIGGGIGAKPWVRERSAVRISNLSESMTEADLEELVKKIGPHTKLYLAREKNTGLCKGFAYVHFKFRQDAAAAIEILNGHGYDHLILCVEWSKPQP</sequence>
<reference key="1">
    <citation type="journal article" date="2005" name="Genome Res.">
        <title>Comparative genome sequencing of Drosophila pseudoobscura: chromosomal, gene, and cis-element evolution.</title>
        <authorList>
            <person name="Richards S."/>
            <person name="Liu Y."/>
            <person name="Bettencourt B.R."/>
            <person name="Hradecky P."/>
            <person name="Letovsky S."/>
            <person name="Nielsen R."/>
            <person name="Thornton K."/>
            <person name="Hubisz M.J."/>
            <person name="Chen R."/>
            <person name="Meisel R.P."/>
            <person name="Couronne O."/>
            <person name="Hua S."/>
            <person name="Smith M.A."/>
            <person name="Zhang P."/>
            <person name="Liu J."/>
            <person name="Bussemaker H.J."/>
            <person name="van Batenburg M.F."/>
            <person name="Howells S.L."/>
            <person name="Scherer S.E."/>
            <person name="Sodergren E."/>
            <person name="Matthews B.B."/>
            <person name="Crosby M.A."/>
            <person name="Schroeder A.J."/>
            <person name="Ortiz-Barrientos D."/>
            <person name="Rives C.M."/>
            <person name="Metzker M.L."/>
            <person name="Muzny D.M."/>
            <person name="Scott G."/>
            <person name="Steffen D."/>
            <person name="Wheeler D.A."/>
            <person name="Worley K.C."/>
            <person name="Havlak P."/>
            <person name="Durbin K.J."/>
            <person name="Egan A."/>
            <person name="Gill R."/>
            <person name="Hume J."/>
            <person name="Morgan M.B."/>
            <person name="Miner G."/>
            <person name="Hamilton C."/>
            <person name="Huang Y."/>
            <person name="Waldron L."/>
            <person name="Verduzco D."/>
            <person name="Clerc-Blankenburg K.P."/>
            <person name="Dubchak I."/>
            <person name="Noor M.A.F."/>
            <person name="Anderson W."/>
            <person name="White K.P."/>
            <person name="Clark A.G."/>
            <person name="Schaeffer S.W."/>
            <person name="Gelbart W.M."/>
            <person name="Weinstock G.M."/>
            <person name="Gibbs R.A."/>
        </authorList>
    </citation>
    <scope>NUCLEOTIDE SEQUENCE [LARGE SCALE GENOMIC DNA]</scope>
    <source>
        <strain>MV2-25 / Tucson 14011-0121.94</strain>
    </source>
</reference>
<gene>
    <name evidence="1" type="primary">eIF3g2</name>
    <name evidence="2" type="synonym">eIF3-S4</name>
    <name evidence="1" type="synonym">eIF3gb</name>
    <name type="ORF">GA10616</name>
</gene>
<proteinExistence type="inferred from homology"/>
<accession>Q298C0</accession>
<evidence type="ECO:0000250" key="1">
    <source>
        <dbReference type="UniProtKB" id="Q9VDM6"/>
    </source>
</evidence>
<evidence type="ECO:0000255" key="2">
    <source>
        <dbReference type="HAMAP-Rule" id="MF_03006"/>
    </source>
</evidence>
<organism>
    <name type="scientific">Drosophila pseudoobscura pseudoobscura</name>
    <name type="common">Fruit fly</name>
    <dbReference type="NCBI Taxonomy" id="46245"/>
    <lineage>
        <taxon>Eukaryota</taxon>
        <taxon>Metazoa</taxon>
        <taxon>Ecdysozoa</taxon>
        <taxon>Arthropoda</taxon>
        <taxon>Hexapoda</taxon>
        <taxon>Insecta</taxon>
        <taxon>Pterygota</taxon>
        <taxon>Neoptera</taxon>
        <taxon>Endopterygota</taxon>
        <taxon>Diptera</taxon>
        <taxon>Brachycera</taxon>
        <taxon>Muscomorpha</taxon>
        <taxon>Ephydroidea</taxon>
        <taxon>Drosophilidae</taxon>
        <taxon>Drosophila</taxon>
        <taxon>Sophophora</taxon>
    </lineage>
</organism>
<feature type="chain" id="PRO_0000365420" description="Eukaryotic translation initiation factor 3 subunit G-2">
    <location>
        <begin position="1"/>
        <end position="274"/>
    </location>
</feature>
<feature type="domain" description="RRM" evidence="2">
    <location>
        <begin position="194"/>
        <end position="272"/>
    </location>
</feature>
<comment type="function">
    <text evidence="2">RNA-binding component of the eukaryotic translation initiation factor 3 (eIF-3) complex, which is involved in protein synthesis of a specialized repertoire of mRNAs and, together with other initiation factors, stimulates binding of mRNA and methionyl-tRNAi to the 40S ribosome. The eIF-3 complex specifically targets and initiates translation of a subset of mRNAs involved in cell proliferation. This subunit can bind 18S rRNA.</text>
</comment>
<comment type="subunit">
    <text evidence="2">Component of the eukaryotic translation initiation factor 3 (eIF-3) complex. The eIF-3 complex interacts with pix.</text>
</comment>
<comment type="subcellular location">
    <subcellularLocation>
        <location evidence="2">Cytoplasm</location>
    </subcellularLocation>
</comment>
<comment type="similarity">
    <text evidence="2">Belongs to the eIF-3 subunit G family.</text>
</comment>
<dbReference type="EMBL" id="CM000070">
    <property type="protein sequence ID" value="EAL28035.1"/>
    <property type="molecule type" value="Genomic_DNA"/>
</dbReference>
<dbReference type="RefSeq" id="XP_001358892.1">
    <property type="nucleotide sequence ID" value="XM_001358855.3"/>
</dbReference>
<dbReference type="RefSeq" id="XP_015037438.1">
    <property type="nucleotide sequence ID" value="XM_015181952.1"/>
</dbReference>
<dbReference type="SMR" id="Q298C0"/>
<dbReference type="FunCoup" id="Q298C0">
    <property type="interactions" value="1175"/>
</dbReference>
<dbReference type="STRING" id="46245.Q298C0"/>
<dbReference type="EnsemblMetazoa" id="FBtr0285631">
    <property type="protein sequence ID" value="FBpp0284069"/>
    <property type="gene ID" value="FBgn0070673"/>
</dbReference>
<dbReference type="EnsemblMetazoa" id="FBtr0369308">
    <property type="protein sequence ID" value="FBpp0331909"/>
    <property type="gene ID" value="FBgn0070673"/>
</dbReference>
<dbReference type="GeneID" id="4801862"/>
<dbReference type="KEGG" id="dpo:4801862"/>
<dbReference type="CTD" id="42422"/>
<dbReference type="eggNOG" id="KOG0122">
    <property type="taxonomic scope" value="Eukaryota"/>
</dbReference>
<dbReference type="HOGENOM" id="CLU_034595_0_0_1"/>
<dbReference type="InParanoid" id="Q298C0"/>
<dbReference type="OMA" id="EEVHMVF"/>
<dbReference type="PhylomeDB" id="Q298C0"/>
<dbReference type="Proteomes" id="UP000001819">
    <property type="component" value="Chromosome 2"/>
</dbReference>
<dbReference type="Bgee" id="FBgn0070673">
    <property type="expression patterns" value="Expressed in male reproductive system and 1 other cell type or tissue"/>
</dbReference>
<dbReference type="GO" id="GO:0016282">
    <property type="term" value="C:eukaryotic 43S preinitiation complex"/>
    <property type="evidence" value="ECO:0007669"/>
    <property type="project" value="UniProtKB-UniRule"/>
</dbReference>
<dbReference type="GO" id="GO:0033290">
    <property type="term" value="C:eukaryotic 48S preinitiation complex"/>
    <property type="evidence" value="ECO:0007669"/>
    <property type="project" value="UniProtKB-UniRule"/>
</dbReference>
<dbReference type="GO" id="GO:0005852">
    <property type="term" value="C:eukaryotic translation initiation factor 3 complex"/>
    <property type="evidence" value="ECO:0007669"/>
    <property type="project" value="UniProtKB-UniRule"/>
</dbReference>
<dbReference type="GO" id="GO:0003723">
    <property type="term" value="F:RNA binding"/>
    <property type="evidence" value="ECO:0007669"/>
    <property type="project" value="UniProtKB-UniRule"/>
</dbReference>
<dbReference type="GO" id="GO:0003743">
    <property type="term" value="F:translation initiation factor activity"/>
    <property type="evidence" value="ECO:0007669"/>
    <property type="project" value="UniProtKB-UniRule"/>
</dbReference>
<dbReference type="GO" id="GO:0001732">
    <property type="term" value="P:formation of cytoplasmic translation initiation complex"/>
    <property type="evidence" value="ECO:0007669"/>
    <property type="project" value="UniProtKB-UniRule"/>
</dbReference>
<dbReference type="CDD" id="cd12933">
    <property type="entry name" value="eIF3G"/>
    <property type="match status" value="1"/>
</dbReference>
<dbReference type="CDD" id="cd12408">
    <property type="entry name" value="RRM_eIF3G_like"/>
    <property type="match status" value="1"/>
</dbReference>
<dbReference type="Gene3D" id="3.30.70.330">
    <property type="match status" value="1"/>
</dbReference>
<dbReference type="HAMAP" id="MF_03006">
    <property type="entry name" value="eIF3g"/>
    <property type="match status" value="1"/>
</dbReference>
<dbReference type="InterPro" id="IPR017334">
    <property type="entry name" value="eIF3_g"/>
</dbReference>
<dbReference type="InterPro" id="IPR024675">
    <property type="entry name" value="eIF3g_N"/>
</dbReference>
<dbReference type="InterPro" id="IPR034240">
    <property type="entry name" value="eIF3G_RRM"/>
</dbReference>
<dbReference type="InterPro" id="IPR012677">
    <property type="entry name" value="Nucleotide-bd_a/b_plait_sf"/>
</dbReference>
<dbReference type="InterPro" id="IPR035979">
    <property type="entry name" value="RBD_domain_sf"/>
</dbReference>
<dbReference type="InterPro" id="IPR000504">
    <property type="entry name" value="RRM_dom"/>
</dbReference>
<dbReference type="PANTHER" id="PTHR10352">
    <property type="entry name" value="EUKARYOTIC TRANSLATION INITIATION FACTOR 3 SUBUNIT G"/>
    <property type="match status" value="1"/>
</dbReference>
<dbReference type="Pfam" id="PF12353">
    <property type="entry name" value="eIF3g"/>
    <property type="match status" value="1"/>
</dbReference>
<dbReference type="Pfam" id="PF00076">
    <property type="entry name" value="RRM_1"/>
    <property type="match status" value="1"/>
</dbReference>
<dbReference type="PIRSF" id="PIRSF037949">
    <property type="entry name" value="Transl_init_eIF-3_RNA-bind"/>
    <property type="match status" value="1"/>
</dbReference>
<dbReference type="SMART" id="SM00360">
    <property type="entry name" value="RRM"/>
    <property type="match status" value="1"/>
</dbReference>
<dbReference type="SUPFAM" id="SSF54928">
    <property type="entry name" value="RNA-binding domain, RBD"/>
    <property type="match status" value="1"/>
</dbReference>
<dbReference type="PROSITE" id="PS50102">
    <property type="entry name" value="RRM"/>
    <property type="match status" value="1"/>
</dbReference>
<keyword id="KW-0963">Cytoplasm</keyword>
<keyword id="KW-0396">Initiation factor</keyword>
<keyword id="KW-0648">Protein biosynthesis</keyword>
<keyword id="KW-1185">Reference proteome</keyword>
<keyword id="KW-0694">RNA-binding</keyword>
<protein>
    <recommendedName>
        <fullName evidence="1">Eukaryotic translation initiation factor 3 subunit G-2</fullName>
    </recommendedName>
    <alternativeName>
        <fullName evidence="2">Eukaryotic translation initiation factor 3 RNA-binding subunit 2</fullName>
        <shortName evidence="2">eIF-3 RNA-binding subunit 2</shortName>
    </alternativeName>
    <alternativeName>
        <fullName evidence="2">Eukaryotic translation initiation factor 3 subunit 4-2</fullName>
    </alternativeName>
</protein>
<name>EI3G2_DROPS</name>